<keyword id="KW-1043">Host membrane</keyword>
<keyword id="KW-0472">Membrane</keyword>
<keyword id="KW-0964">Secreted</keyword>
<keyword id="KW-0812">Transmembrane</keyword>
<keyword id="KW-1133">Transmembrane helix</keyword>
<keyword id="KW-0843">Virulence</keyword>
<accession>E1WAC8</accession>
<accession>Q56020</accession>
<accession>Q56025</accession>
<accession>Q7CPX1</accession>
<protein>
    <recommendedName>
        <fullName evidence="8">SPI-1 type 3 secretion system translocon protein SctB</fullName>
        <shortName evidence="8">SPI-1 T3SS translocon protein SctB</shortName>
    </recommendedName>
    <alternativeName>
        <fullName>Cell invasion protein SipC</fullName>
    </alternativeName>
    <alternativeName>
        <fullName>Effector protein SipC</fullName>
    </alternativeName>
</protein>
<comment type="function">
    <text evidence="1 4">Component of the type III secretion system 1 (SPI-1 T3SS), also called injectisome, which is used to inject bacterial effector proteins into eukaryotic host cells (By similarity). SipB/SctE1 and SipC/SctB1 are inserted into the host membrane where they form a pore and allow the translocation of effector proteins into the cytosol of target cells (By similarity). Plays a role in promoting human PERP translocation to the host apical epithelial cell surface via promotion of exocytic translocation (PubMed:27078059).</text>
</comment>
<comment type="subunit">
    <text evidence="1 3">The core secretion machinery of the T3SS is composed of approximately 20 different proteins, including cytoplasmic components, a base, an export apparatus and a needle (By similarity). This subunit is involved in the formation of a pore, called the translocon, in host membrane (By similarity). Interacts with human PERP (PubMed:25486861).</text>
</comment>
<comment type="interaction">
    <interactant intactId="EBI-6470515">
        <id>E1WAC8</id>
    </interactant>
    <interactant intactId="EBI-6470515">
        <id>E1WAC8</id>
        <label>sctB1</label>
    </interactant>
    <organismsDiffer>false</organismsDiffer>
    <experiments>3</experiments>
</comment>
<comment type="subcellular location">
    <subcellularLocation>
        <location evidence="5">Secreted</location>
    </subcellularLocation>
    <subcellularLocation>
        <location evidence="1">Host membrane</location>
        <topology evidence="2">Single-pass membrane protein</topology>
    </subcellularLocation>
    <text evidence="5">Secreted via the type III secretion system 1 (SPI-1 T3SS).</text>
</comment>
<comment type="disruption phenotype">
    <text evidence="5">Mutant is unable to enter cultured epithelial cells.</text>
</comment>
<comment type="similarity">
    <text evidence="8">Belongs to the SctB/SipC family.</text>
</comment>
<comment type="sequence caution" evidence="8">
    <conflict type="frameshift">
        <sequence resource="EMBL-CDS" id="AAA75170"/>
    </conflict>
</comment>
<dbReference type="EMBL" id="U25631">
    <property type="protein sequence ID" value="AAA75170.1"/>
    <property type="status" value="ALT_FRAME"/>
    <property type="molecule type" value="Genomic_DNA"/>
</dbReference>
<dbReference type="EMBL" id="U30491">
    <property type="protein sequence ID" value="AAC43547.1"/>
    <property type="molecule type" value="Genomic_DNA"/>
</dbReference>
<dbReference type="EMBL" id="FQ312003">
    <property type="protein sequence ID" value="CBW18961.1"/>
    <property type="molecule type" value="Genomic_DNA"/>
</dbReference>
<dbReference type="PIR" id="S70548">
    <property type="entry name" value="S70548"/>
</dbReference>
<dbReference type="RefSeq" id="WP_000909019.1">
    <property type="nucleotide sequence ID" value="NZ_QASL01000017.1"/>
</dbReference>
<dbReference type="IntAct" id="E1WAC8">
    <property type="interactions" value="5"/>
</dbReference>
<dbReference type="KEGG" id="sey:SL1344_2863"/>
<dbReference type="PATRIC" id="fig|216597.6.peg.3185"/>
<dbReference type="HOGENOM" id="CLU_055996_0_0_6"/>
<dbReference type="Proteomes" id="UP000008962">
    <property type="component" value="Chromosome"/>
</dbReference>
<dbReference type="GO" id="GO:0005576">
    <property type="term" value="C:extracellular region"/>
    <property type="evidence" value="ECO:0007669"/>
    <property type="project" value="UniProtKB-SubCell"/>
</dbReference>
<dbReference type="GO" id="GO:0033644">
    <property type="term" value="C:host cell membrane"/>
    <property type="evidence" value="ECO:0007669"/>
    <property type="project" value="UniProtKB-SubCell"/>
</dbReference>
<dbReference type="GO" id="GO:0016020">
    <property type="term" value="C:membrane"/>
    <property type="evidence" value="ECO:0007669"/>
    <property type="project" value="UniProtKB-KW"/>
</dbReference>
<dbReference type="GO" id="GO:0045335">
    <property type="term" value="C:phagocytic vesicle"/>
    <property type="evidence" value="ECO:0000315"/>
    <property type="project" value="AgBase"/>
</dbReference>
<dbReference type="GO" id="GO:0042802">
    <property type="term" value="F:identical protein binding"/>
    <property type="evidence" value="ECO:0000353"/>
    <property type="project" value="IntAct"/>
</dbReference>
<dbReference type="GO" id="GO:0019905">
    <property type="term" value="F:syntaxin binding"/>
    <property type="evidence" value="ECO:0000353"/>
    <property type="project" value="AgBase"/>
</dbReference>
<dbReference type="GO" id="GO:0007015">
    <property type="term" value="P:actin filament organization"/>
    <property type="evidence" value="ECO:0000315"/>
    <property type="project" value="AgBase"/>
</dbReference>
<dbReference type="GO" id="GO:1903829">
    <property type="term" value="P:positive regulation of protein localization"/>
    <property type="evidence" value="ECO:0000315"/>
    <property type="project" value="UniProtKB"/>
</dbReference>
<dbReference type="GO" id="GO:0034067">
    <property type="term" value="P:protein localization to Golgi apparatus"/>
    <property type="evidence" value="ECO:0000315"/>
    <property type="project" value="AgBase"/>
</dbReference>
<dbReference type="GO" id="GO:2000535">
    <property type="term" value="P:regulation of entry of bacterium into host cell"/>
    <property type="evidence" value="ECO:0000315"/>
    <property type="project" value="AgBase"/>
</dbReference>
<dbReference type="GO" id="GO:0032880">
    <property type="term" value="P:regulation of protein localization"/>
    <property type="evidence" value="ECO:0000315"/>
    <property type="project" value="AgBase"/>
</dbReference>
<dbReference type="InterPro" id="IPR005427">
    <property type="entry name" value="BipC/SctB"/>
</dbReference>
<dbReference type="NCBIfam" id="TIGR02101">
    <property type="entry name" value="IpaC_SipC"/>
    <property type="match status" value="1"/>
</dbReference>
<dbReference type="NCBIfam" id="NF011900">
    <property type="entry name" value="PRK15373.1"/>
    <property type="match status" value="1"/>
</dbReference>
<dbReference type="NCBIfam" id="NF038055">
    <property type="entry name" value="T3SS_SctB_pilot"/>
    <property type="match status" value="1"/>
</dbReference>
<dbReference type="Pfam" id="PF09599">
    <property type="entry name" value="IpaC_SipC"/>
    <property type="match status" value="1"/>
</dbReference>
<dbReference type="PRINTS" id="PR01608">
    <property type="entry name" value="BACINVASINC"/>
</dbReference>
<organism>
    <name type="scientific">Salmonella typhimurium (strain SL1344)</name>
    <dbReference type="NCBI Taxonomy" id="216597"/>
    <lineage>
        <taxon>Bacteria</taxon>
        <taxon>Pseudomonadati</taxon>
        <taxon>Pseudomonadota</taxon>
        <taxon>Gammaproteobacteria</taxon>
        <taxon>Enterobacterales</taxon>
        <taxon>Enterobacteriaceae</taxon>
        <taxon>Salmonella</taxon>
    </lineage>
</organism>
<name>SCTB1_SALTS</name>
<gene>
    <name evidence="1" type="primary">sctB1</name>
    <name evidence="6 7" type="synonym">sipC</name>
    <name type="synonym">sspC</name>
    <name type="ordered locus">SL1344_2863</name>
</gene>
<evidence type="ECO:0000250" key="1">
    <source>
        <dbReference type="UniProtKB" id="P0CL47"/>
    </source>
</evidence>
<evidence type="ECO:0000255" key="2"/>
<evidence type="ECO:0000269" key="3">
    <source>
    </source>
</evidence>
<evidence type="ECO:0000269" key="4">
    <source>
    </source>
</evidence>
<evidence type="ECO:0000269" key="5">
    <source>
    </source>
</evidence>
<evidence type="ECO:0000303" key="6">
    <source>
    </source>
</evidence>
<evidence type="ECO:0000303" key="7">
    <source>
    </source>
</evidence>
<evidence type="ECO:0000305" key="8"/>
<proteinExistence type="evidence at protein level"/>
<reference key="1">
    <citation type="journal article" date="1995" name="J. Bacteriol.">
        <title>Homologs of the Shigella IpaB and IpaC invasins are required for Salmonella typhimurium entry into cultured epithelial cells.</title>
        <authorList>
            <person name="Kaniga K."/>
            <person name="Tucker S.C."/>
            <person name="Trollinger D."/>
            <person name="Galan J.E."/>
        </authorList>
    </citation>
    <scope>NUCLEOTIDE SEQUENCE [GENOMIC DNA]</scope>
    <scope>SUBCELLULAR LOCATION</scope>
    <scope>DISRUPTION PHENOTYPE</scope>
    <source>
        <strain>SL1344</strain>
    </source>
</reference>
<reference key="2">
    <citation type="journal article" date="1995" name="Mol. Microbiol.">
        <title>Salmonella typhimurium secreted invasion determinants are homologous to Shigella Ipa proteins.</title>
        <authorList>
            <person name="Hueck C.J."/>
            <person name="Hantman M.J."/>
            <person name="Bajaj V."/>
            <person name="Johnston C."/>
            <person name="Lee C.A."/>
            <person name="Miller S.I."/>
        </authorList>
    </citation>
    <scope>NUCLEOTIDE SEQUENCE [GENOMIC DNA]</scope>
    <source>
        <strain>SL1344</strain>
    </source>
</reference>
<reference key="3">
    <citation type="journal article" date="2012" name="Proc. Natl. Acad. Sci. U.S.A.">
        <title>The transcriptional landscape and small RNAs of Salmonella enterica serovar Typhimurium.</title>
        <authorList>
            <person name="Kroger C."/>
            <person name="Dillon S.C."/>
            <person name="Cameron A.D."/>
            <person name="Papenfort K."/>
            <person name="Sivasankaran S.K."/>
            <person name="Hokamp K."/>
            <person name="Chao Y."/>
            <person name="Sittka A."/>
            <person name="Hebrard M."/>
            <person name="Handler K."/>
            <person name="Colgan A."/>
            <person name="Leekitcharoenphon P."/>
            <person name="Langridge G.C."/>
            <person name="Lohan A.J."/>
            <person name="Loftus B."/>
            <person name="Lucchini S."/>
            <person name="Ussery D.W."/>
            <person name="Dorman C.J."/>
            <person name="Thomson N.R."/>
            <person name="Vogel J."/>
            <person name="Hinton J.C."/>
        </authorList>
    </citation>
    <scope>NUCLEOTIDE SEQUENCE [LARGE SCALE GENOMIC DNA]</scope>
    <source>
        <strain>SL1344</strain>
    </source>
</reference>
<reference key="4">
    <citation type="journal article" date="2015" name="Cell. Microbiol.">
        <title>PERP, a host tetraspanning membrane protein, is required for Salmonella-induced inflammation.</title>
        <authorList>
            <person name="Hallstrom K.N."/>
            <person name="Srikanth C.V."/>
            <person name="Agbor T.A."/>
            <person name="Dumont C.M."/>
            <person name="Peters K.N."/>
            <person name="Paraoan L."/>
            <person name="Casanova J.E."/>
            <person name="Boll E.J."/>
            <person name="McCormick B.A."/>
        </authorList>
    </citation>
    <scope>INTERACTION WITH HOST PERP</scope>
</reference>
<reference key="5">
    <citation type="journal article" date="2016" name="Gut Microbes">
        <title>The type three secreted effector SipC regulates the trafficking of PERP during Salmonella infection.</title>
        <authorList>
            <person name="Hallstrom K.N."/>
            <person name="McCormick B.A."/>
        </authorList>
    </citation>
    <scope>FUNCTION</scope>
</reference>
<sequence length="409" mass="42983">MLISNVGINPAAYLNNHSVENSSQTASQSVSAKDILNSIGISSSKVSDLGLSPTLSAPAPGVLTQTPGTITSFLKASIQNTDMNQDLNALANNVTTKANEVVQTQLREQQAEVGKFFDISGMSSSAVALLAAANTLMLTLNQADSKLSGKLSLVSFDAAKTTASSMMREGMNALSGSISQSALQLGITGVGAKLEYKGLQNERGALKHNAAKIDKLTTESHSIKNVLNGQNSVKLGAEGVDSLKSLNMKKTGTDATKNLNDATLKSNAGTSATESLGIKDSNKQISPEHQAILSKRLESVESDIRLEQNTMDMTRIDARKMQMTGDLIMKNSVTVGGIAGASGQYAATQERSEQQISQVNNRVASTASDEARESSRKSTSLIQEMLKTMESINQSKASALAAIAGNIRA</sequence>
<feature type="chain" id="PRO_0000406083" description="SPI-1 type 3 secretion system translocon protein SctB">
    <location>
        <begin position="1"/>
        <end position="409"/>
    </location>
</feature>
<feature type="transmembrane region" description="Helical" evidence="2">
    <location>
        <begin position="119"/>
        <end position="140"/>
    </location>
</feature>
<feature type="sequence conflict" description="In Ref. 1; AAA75170." evidence="8" ref="1">
    <original>F</original>
    <variation>S</variation>
    <location>
        <position position="73"/>
    </location>
</feature>
<feature type="sequence conflict" description="In Ref. 1; AAA75170." evidence="8" ref="1">
    <original>T</original>
    <variation>Y</variation>
    <location>
        <position position="310"/>
    </location>
</feature>
<feature type="sequence conflict" description="In Ref. 1; AAA75170." evidence="8" ref="1">
    <original>M</original>
    <variation>I</variation>
    <location>
        <position position="313"/>
    </location>
</feature>